<proteinExistence type="inferred from homology"/>
<accession>B7KL68</accession>
<evidence type="ECO:0000255" key="1">
    <source>
        <dbReference type="HAMAP-Rule" id="MF_01217"/>
    </source>
</evidence>
<evidence type="ECO:0000255" key="2">
    <source>
        <dbReference type="PROSITE-ProRule" id="PRU00258"/>
    </source>
</evidence>
<keyword id="KW-0963">Cytoplasm</keyword>
<keyword id="KW-0275">Fatty acid biosynthesis</keyword>
<keyword id="KW-0276">Fatty acid metabolism</keyword>
<keyword id="KW-0444">Lipid biosynthesis</keyword>
<keyword id="KW-0443">Lipid metabolism</keyword>
<keyword id="KW-0596">Phosphopantetheine</keyword>
<keyword id="KW-0597">Phosphoprotein</keyword>
<keyword id="KW-1185">Reference proteome</keyword>
<dbReference type="EMBL" id="CP001291">
    <property type="protein sequence ID" value="ACK72440.1"/>
    <property type="molecule type" value="Genomic_DNA"/>
</dbReference>
<dbReference type="RefSeq" id="WP_015956025.1">
    <property type="nucleotide sequence ID" value="NC_011729.1"/>
</dbReference>
<dbReference type="SMR" id="B7KL68"/>
<dbReference type="STRING" id="65393.PCC7424_4067"/>
<dbReference type="KEGG" id="cyc:PCC7424_4067"/>
<dbReference type="eggNOG" id="COG0236">
    <property type="taxonomic scope" value="Bacteria"/>
</dbReference>
<dbReference type="HOGENOM" id="CLU_108696_5_1_3"/>
<dbReference type="OrthoDB" id="9804551at2"/>
<dbReference type="UniPathway" id="UPA00094"/>
<dbReference type="Proteomes" id="UP000002384">
    <property type="component" value="Chromosome"/>
</dbReference>
<dbReference type="GO" id="GO:0005829">
    <property type="term" value="C:cytosol"/>
    <property type="evidence" value="ECO:0007669"/>
    <property type="project" value="TreeGrafter"/>
</dbReference>
<dbReference type="GO" id="GO:0016020">
    <property type="term" value="C:membrane"/>
    <property type="evidence" value="ECO:0007669"/>
    <property type="project" value="GOC"/>
</dbReference>
<dbReference type="GO" id="GO:0000035">
    <property type="term" value="F:acyl binding"/>
    <property type="evidence" value="ECO:0007669"/>
    <property type="project" value="TreeGrafter"/>
</dbReference>
<dbReference type="GO" id="GO:0000036">
    <property type="term" value="F:acyl carrier activity"/>
    <property type="evidence" value="ECO:0007669"/>
    <property type="project" value="UniProtKB-UniRule"/>
</dbReference>
<dbReference type="GO" id="GO:0009245">
    <property type="term" value="P:lipid A biosynthetic process"/>
    <property type="evidence" value="ECO:0007669"/>
    <property type="project" value="TreeGrafter"/>
</dbReference>
<dbReference type="FunFam" id="1.10.1200.10:FF:000003">
    <property type="entry name" value="Acyl carrier protein"/>
    <property type="match status" value="1"/>
</dbReference>
<dbReference type="Gene3D" id="1.10.1200.10">
    <property type="entry name" value="ACP-like"/>
    <property type="match status" value="1"/>
</dbReference>
<dbReference type="HAMAP" id="MF_01217">
    <property type="entry name" value="Acyl_carrier"/>
    <property type="match status" value="1"/>
</dbReference>
<dbReference type="InterPro" id="IPR003231">
    <property type="entry name" value="ACP"/>
</dbReference>
<dbReference type="InterPro" id="IPR036736">
    <property type="entry name" value="ACP-like_sf"/>
</dbReference>
<dbReference type="InterPro" id="IPR009081">
    <property type="entry name" value="PP-bd_ACP"/>
</dbReference>
<dbReference type="InterPro" id="IPR006162">
    <property type="entry name" value="Ppantetheine_attach_site"/>
</dbReference>
<dbReference type="NCBIfam" id="TIGR00517">
    <property type="entry name" value="acyl_carrier"/>
    <property type="match status" value="1"/>
</dbReference>
<dbReference type="NCBIfam" id="NF002148">
    <property type="entry name" value="PRK00982.1-2"/>
    <property type="match status" value="1"/>
</dbReference>
<dbReference type="NCBIfam" id="NF002149">
    <property type="entry name" value="PRK00982.1-3"/>
    <property type="match status" value="1"/>
</dbReference>
<dbReference type="NCBIfam" id="NF002150">
    <property type="entry name" value="PRK00982.1-4"/>
    <property type="match status" value="1"/>
</dbReference>
<dbReference type="NCBIfam" id="NF002151">
    <property type="entry name" value="PRK00982.1-5"/>
    <property type="match status" value="1"/>
</dbReference>
<dbReference type="PANTHER" id="PTHR20863">
    <property type="entry name" value="ACYL CARRIER PROTEIN"/>
    <property type="match status" value="1"/>
</dbReference>
<dbReference type="PANTHER" id="PTHR20863:SF76">
    <property type="entry name" value="CARRIER DOMAIN-CONTAINING PROTEIN"/>
    <property type="match status" value="1"/>
</dbReference>
<dbReference type="Pfam" id="PF00550">
    <property type="entry name" value="PP-binding"/>
    <property type="match status" value="1"/>
</dbReference>
<dbReference type="SUPFAM" id="SSF47336">
    <property type="entry name" value="ACP-like"/>
    <property type="match status" value="1"/>
</dbReference>
<dbReference type="PROSITE" id="PS50075">
    <property type="entry name" value="CARRIER"/>
    <property type="match status" value="1"/>
</dbReference>
<dbReference type="PROSITE" id="PS00012">
    <property type="entry name" value="PHOSPHOPANTETHEINE"/>
    <property type="match status" value="1"/>
</dbReference>
<gene>
    <name evidence="1" type="primary">acpP</name>
    <name type="ordered locus">PCC7424_4067</name>
</gene>
<protein>
    <recommendedName>
        <fullName evidence="1">Acyl carrier protein</fullName>
        <shortName evidence="1">ACP</shortName>
    </recommendedName>
</protein>
<feature type="chain" id="PRO_1000139016" description="Acyl carrier protein">
    <location>
        <begin position="1"/>
        <end position="82"/>
    </location>
</feature>
<feature type="domain" description="Carrier" evidence="2">
    <location>
        <begin position="3"/>
        <end position="78"/>
    </location>
</feature>
<feature type="modified residue" description="O-(pantetheine 4'-phosphoryl)serine" evidence="2">
    <location>
        <position position="38"/>
    </location>
</feature>
<organism>
    <name type="scientific">Gloeothece citriformis (strain PCC 7424)</name>
    <name type="common">Cyanothece sp. (strain PCC 7424)</name>
    <dbReference type="NCBI Taxonomy" id="65393"/>
    <lineage>
        <taxon>Bacteria</taxon>
        <taxon>Bacillati</taxon>
        <taxon>Cyanobacteriota</taxon>
        <taxon>Cyanophyceae</taxon>
        <taxon>Oscillatoriophycideae</taxon>
        <taxon>Chroococcales</taxon>
        <taxon>Aphanothecaceae</taxon>
        <taxon>Gloeothece</taxon>
        <taxon>Gloeothece citriformis</taxon>
    </lineage>
</organism>
<reference key="1">
    <citation type="journal article" date="2011" name="MBio">
        <title>Novel metabolic attributes of the genus Cyanothece, comprising a group of unicellular nitrogen-fixing Cyanobacteria.</title>
        <authorList>
            <person name="Bandyopadhyay A."/>
            <person name="Elvitigala T."/>
            <person name="Welsh E."/>
            <person name="Stockel J."/>
            <person name="Liberton M."/>
            <person name="Min H."/>
            <person name="Sherman L.A."/>
            <person name="Pakrasi H.B."/>
        </authorList>
    </citation>
    <scope>NUCLEOTIDE SEQUENCE [LARGE SCALE GENOMIC DNA]</scope>
    <source>
        <strain>PCC 7424</strain>
    </source>
</reference>
<sequence>MNQEIFERVKKVVIDQLEVPEDSVVPEASFANDLNADSLDTVELVMALEEEFDIEIPDEEAEKIDTVGKAVEHISEKVEATA</sequence>
<comment type="function">
    <text evidence="1">Carrier of the growing fatty acid chain in fatty acid biosynthesis.</text>
</comment>
<comment type="pathway">
    <text evidence="1">Lipid metabolism; fatty acid biosynthesis.</text>
</comment>
<comment type="subcellular location">
    <subcellularLocation>
        <location evidence="1">Cytoplasm</location>
    </subcellularLocation>
</comment>
<comment type="PTM">
    <text evidence="1">4'-phosphopantetheine is transferred from CoA to a specific serine of apo-ACP by AcpS. This modification is essential for activity because fatty acids are bound in thioester linkage to the sulfhydryl of the prosthetic group.</text>
</comment>
<comment type="similarity">
    <text evidence="1">Belongs to the acyl carrier protein (ACP) family.</text>
</comment>
<name>ACP_GLOC7</name>